<gene>
    <name type="primary">Proc</name>
</gene>
<accession>P31394</accession>
<name>PROC_RAT</name>
<reference key="1">
    <citation type="journal article" date="1992" name="Biochim. Biophys. Acta">
        <title>The cDNA cloning and mRNA expression of rat protein C.</title>
        <authorList>
            <person name="Okafuji T."/>
            <person name="Maekawa K."/>
            <person name="Nawa K."/>
            <person name="Marumoto Y."/>
        </authorList>
    </citation>
    <scope>NUCLEOTIDE SEQUENCE [MRNA]</scope>
    <source>
        <strain>Wistar</strain>
        <tissue>Liver</tissue>
    </source>
</reference>
<proteinExistence type="evidence at transcript level"/>
<evidence type="ECO:0000250" key="1"/>
<evidence type="ECO:0000250" key="2">
    <source>
        <dbReference type="UniProtKB" id="P00745"/>
    </source>
</evidence>
<evidence type="ECO:0000250" key="3">
    <source>
        <dbReference type="UniProtKB" id="P04070"/>
    </source>
</evidence>
<evidence type="ECO:0000255" key="4"/>
<evidence type="ECO:0000255" key="5">
    <source>
        <dbReference type="PROSITE-ProRule" id="PRU00076"/>
    </source>
</evidence>
<evidence type="ECO:0000255" key="6">
    <source>
        <dbReference type="PROSITE-ProRule" id="PRU00274"/>
    </source>
</evidence>
<evidence type="ECO:0000255" key="7">
    <source>
        <dbReference type="PROSITE-ProRule" id="PRU00463"/>
    </source>
</evidence>
<keyword id="KW-0094">Blood coagulation</keyword>
<keyword id="KW-0106">Calcium</keyword>
<keyword id="KW-0165">Cleavage on pair of basic residues</keyword>
<keyword id="KW-1015">Disulfide bond</keyword>
<keyword id="KW-0245">EGF-like domain</keyword>
<keyword id="KW-0256">Endoplasmic reticulum</keyword>
<keyword id="KW-0301">Gamma-carboxyglutamic acid</keyword>
<keyword id="KW-0325">Glycoprotein</keyword>
<keyword id="KW-0333">Golgi apparatus</keyword>
<keyword id="KW-0356">Hemostasis</keyword>
<keyword id="KW-0378">Hydrolase</keyword>
<keyword id="KW-0379">Hydroxylation</keyword>
<keyword id="KW-0645">Protease</keyword>
<keyword id="KW-1185">Reference proteome</keyword>
<keyword id="KW-0677">Repeat</keyword>
<keyword id="KW-0964">Secreted</keyword>
<keyword id="KW-0720">Serine protease</keyword>
<keyword id="KW-0732">Signal</keyword>
<keyword id="KW-0865">Zymogen</keyword>
<comment type="function">
    <text evidence="3">Protein C is a vitamin K-dependent serine protease that regulates blood coagulation by inactivating factors Va and VIIIa in the presence of calcium ions and phospholipids. Exerts a protective effect on the endothelial cell barrier function.</text>
</comment>
<comment type="catalytic activity">
    <reaction>
        <text>Degradation of blood coagulation factors Va and VIIIa.</text>
        <dbReference type="EC" id="3.4.21.69"/>
    </reaction>
</comment>
<comment type="subunit">
    <text>Synthesized as a single chain precursor, which is cleaved into a light chain and a heavy chain held together by a disulfide bond. The enzyme is then activated by thrombin, which cleaves a tetradecapeptide from the amino end of the heavy chain; this reaction, which occurs at the surface of endothelial cells, is strongly promoted by thrombomodulin.</text>
</comment>
<comment type="subcellular location">
    <subcellularLocation>
        <location evidence="3">Secreted</location>
    </subcellularLocation>
    <subcellularLocation>
        <location evidence="3">Golgi apparatus</location>
    </subcellularLocation>
    <subcellularLocation>
        <location evidence="3">Endoplasmic reticulum</location>
    </subcellularLocation>
</comment>
<comment type="tissue specificity">
    <text>Plasma; synthesized in the liver.</text>
</comment>
<comment type="PTM">
    <text>The vitamin K-dependent, enzymatic carboxylation of some Glu residues allows the modified protein to bind calcium.</text>
</comment>
<comment type="PTM">
    <text evidence="1">The iron and 2-oxoglutarate dependent 3-hydroxylation of aspartate and asparagine is (R) stereospecific within EGF domains.</text>
</comment>
<comment type="miscellaneous">
    <text>Calcium also binds, with stronger affinity to another site, beyond the GLA domain. This GLA-independent binding site is necessary for the recognition of the thrombin-thrombomodulin complex.</text>
</comment>
<comment type="similarity">
    <text evidence="6">Belongs to the peptidase S1 family.</text>
</comment>
<dbReference type="EC" id="3.4.21.69"/>
<dbReference type="EMBL" id="X64336">
    <property type="protein sequence ID" value="CAA45617.1"/>
    <property type="molecule type" value="mRNA"/>
</dbReference>
<dbReference type="PIR" id="S18994">
    <property type="entry name" value="S18994"/>
</dbReference>
<dbReference type="RefSeq" id="NP_036935.1">
    <property type="nucleotide sequence ID" value="NM_012803.1"/>
</dbReference>
<dbReference type="SMR" id="P31394"/>
<dbReference type="FunCoup" id="P31394">
    <property type="interactions" value="63"/>
</dbReference>
<dbReference type="STRING" id="10116.ENSRNOP00000019596"/>
<dbReference type="MEROPS" id="S01.218"/>
<dbReference type="GlyCosmos" id="P31394">
    <property type="glycosylation" value="3 sites, No reported glycans"/>
</dbReference>
<dbReference type="GlyGen" id="P31394">
    <property type="glycosylation" value="3 sites"/>
</dbReference>
<dbReference type="PhosphoSitePlus" id="P31394"/>
<dbReference type="PaxDb" id="10116-ENSRNOP00000019596"/>
<dbReference type="GeneID" id="25268"/>
<dbReference type="KEGG" id="rno:25268"/>
<dbReference type="UCSC" id="RGD:3411">
    <property type="organism name" value="rat"/>
</dbReference>
<dbReference type="AGR" id="RGD:3411"/>
<dbReference type="CTD" id="5624"/>
<dbReference type="RGD" id="3411">
    <property type="gene designation" value="Proc"/>
</dbReference>
<dbReference type="eggNOG" id="ENOG502QQ3W">
    <property type="taxonomic scope" value="Eukaryota"/>
</dbReference>
<dbReference type="InParanoid" id="P31394"/>
<dbReference type="PhylomeDB" id="P31394"/>
<dbReference type="Reactome" id="R-RNO-140837">
    <property type="pathway name" value="Intrinsic Pathway of Fibrin Clot Formation"/>
</dbReference>
<dbReference type="Reactome" id="R-RNO-140875">
    <property type="pathway name" value="Common Pathway of Fibrin Clot Formation"/>
</dbReference>
<dbReference type="Reactome" id="R-RNO-159740">
    <property type="pathway name" value="Gamma-carboxylation of protein precursors"/>
</dbReference>
<dbReference type="Reactome" id="R-RNO-159763">
    <property type="pathway name" value="Transport of gamma-carboxylated protein precursors from the endoplasmic reticulum to the Golgi apparatus"/>
</dbReference>
<dbReference type="Reactome" id="R-RNO-159782">
    <property type="pathway name" value="Removal of aminoterminal propeptides from gamma-carboxylated proteins"/>
</dbReference>
<dbReference type="Reactome" id="R-RNO-202733">
    <property type="pathway name" value="Cell surface interactions at the vascular wall"/>
</dbReference>
<dbReference type="Reactome" id="R-RNO-381426">
    <property type="pathway name" value="Regulation of Insulin-like Growth Factor (IGF) transport and uptake by Insulin-like Growth Factor Binding Proteins (IGFBPs)"/>
</dbReference>
<dbReference type="Reactome" id="R-RNO-8957275">
    <property type="pathway name" value="Post-translational protein phosphorylation"/>
</dbReference>
<dbReference type="PRO" id="PR:P31394"/>
<dbReference type="Proteomes" id="UP000002494">
    <property type="component" value="Unplaced"/>
</dbReference>
<dbReference type="GO" id="GO:0005783">
    <property type="term" value="C:endoplasmic reticulum"/>
    <property type="evidence" value="ECO:0000250"/>
    <property type="project" value="UniProtKB"/>
</dbReference>
<dbReference type="GO" id="GO:0005615">
    <property type="term" value="C:extracellular space"/>
    <property type="evidence" value="ECO:0000314"/>
    <property type="project" value="RGD"/>
</dbReference>
<dbReference type="GO" id="GO:0005794">
    <property type="term" value="C:Golgi apparatus"/>
    <property type="evidence" value="ECO:0000250"/>
    <property type="project" value="UniProtKB"/>
</dbReference>
<dbReference type="GO" id="GO:0005509">
    <property type="term" value="F:calcium ion binding"/>
    <property type="evidence" value="ECO:0007669"/>
    <property type="project" value="InterPro"/>
</dbReference>
<dbReference type="GO" id="GO:0042802">
    <property type="term" value="F:identical protein binding"/>
    <property type="evidence" value="ECO:0000314"/>
    <property type="project" value="RGD"/>
</dbReference>
<dbReference type="GO" id="GO:0070012">
    <property type="term" value="F:oligopeptidase activity"/>
    <property type="evidence" value="ECO:0000314"/>
    <property type="project" value="RGD"/>
</dbReference>
<dbReference type="GO" id="GO:0008233">
    <property type="term" value="F:peptidase activity"/>
    <property type="evidence" value="ECO:0000266"/>
    <property type="project" value="RGD"/>
</dbReference>
<dbReference type="GO" id="GO:0004252">
    <property type="term" value="F:serine-type endopeptidase activity"/>
    <property type="evidence" value="ECO:0000250"/>
    <property type="project" value="UniProtKB"/>
</dbReference>
<dbReference type="GO" id="GO:0007596">
    <property type="term" value="P:blood coagulation"/>
    <property type="evidence" value="ECO:0000318"/>
    <property type="project" value="GO_Central"/>
</dbReference>
<dbReference type="GO" id="GO:0001889">
    <property type="term" value="P:liver development"/>
    <property type="evidence" value="ECO:0000270"/>
    <property type="project" value="RGD"/>
</dbReference>
<dbReference type="GO" id="GO:0043066">
    <property type="term" value="P:negative regulation of apoptotic process"/>
    <property type="evidence" value="ECO:0000266"/>
    <property type="project" value="RGD"/>
</dbReference>
<dbReference type="GO" id="GO:0030195">
    <property type="term" value="P:negative regulation of blood coagulation"/>
    <property type="evidence" value="ECO:0000314"/>
    <property type="project" value="RGD"/>
</dbReference>
<dbReference type="GO" id="GO:0050819">
    <property type="term" value="P:negative regulation of coagulation"/>
    <property type="evidence" value="ECO:0000250"/>
    <property type="project" value="UniProtKB"/>
</dbReference>
<dbReference type="GO" id="GO:0050728">
    <property type="term" value="P:negative regulation of inflammatory response"/>
    <property type="evidence" value="ECO:0000250"/>
    <property type="project" value="UniProtKB"/>
</dbReference>
<dbReference type="GO" id="GO:1903142">
    <property type="term" value="P:positive regulation of establishment of endothelial barrier"/>
    <property type="evidence" value="ECO:0000250"/>
    <property type="project" value="UniProtKB"/>
</dbReference>
<dbReference type="GO" id="GO:0030163">
    <property type="term" value="P:protein catabolic process"/>
    <property type="evidence" value="ECO:0000314"/>
    <property type="project" value="RGD"/>
</dbReference>
<dbReference type="GO" id="GO:0006508">
    <property type="term" value="P:proteolysis"/>
    <property type="evidence" value="ECO:0007669"/>
    <property type="project" value="UniProtKB-KW"/>
</dbReference>
<dbReference type="GO" id="GO:0044537">
    <property type="term" value="P:regulation of circulating fibrinogen levels"/>
    <property type="evidence" value="ECO:0000266"/>
    <property type="project" value="RGD"/>
</dbReference>
<dbReference type="CDD" id="cd00054">
    <property type="entry name" value="EGF_CA"/>
    <property type="match status" value="1"/>
</dbReference>
<dbReference type="CDD" id="cd00190">
    <property type="entry name" value="Tryp_SPc"/>
    <property type="match status" value="1"/>
</dbReference>
<dbReference type="FunFam" id="2.40.10.10:FF:000365">
    <property type="match status" value="1"/>
</dbReference>
<dbReference type="FunFam" id="2.10.25.10:FF:000549">
    <property type="entry name" value="Vitamin K-dependent protein C"/>
    <property type="match status" value="1"/>
</dbReference>
<dbReference type="FunFam" id="2.10.25.10:FF:000567">
    <property type="entry name" value="Vitamin K-dependent protein C"/>
    <property type="match status" value="1"/>
</dbReference>
<dbReference type="FunFam" id="2.40.10.10:FF:000256">
    <property type="entry name" value="Vitamin K-dependent protein C"/>
    <property type="match status" value="1"/>
</dbReference>
<dbReference type="FunFam" id="4.10.740.10:FF:000001">
    <property type="entry name" value="vitamin K-dependent protein S"/>
    <property type="match status" value="1"/>
</dbReference>
<dbReference type="Gene3D" id="4.10.740.10">
    <property type="entry name" value="Coagulation Factor IX"/>
    <property type="match status" value="1"/>
</dbReference>
<dbReference type="Gene3D" id="2.10.25.10">
    <property type="entry name" value="Laminin"/>
    <property type="match status" value="2"/>
</dbReference>
<dbReference type="Gene3D" id="2.40.10.10">
    <property type="entry name" value="Trypsin-like serine proteases"/>
    <property type="match status" value="2"/>
</dbReference>
<dbReference type="InterPro" id="IPR017857">
    <property type="entry name" value="Coagulation_fac-like_Gla_dom"/>
</dbReference>
<dbReference type="InterPro" id="IPR001881">
    <property type="entry name" value="EGF-like_Ca-bd_dom"/>
</dbReference>
<dbReference type="InterPro" id="IPR000742">
    <property type="entry name" value="EGF-like_dom"/>
</dbReference>
<dbReference type="InterPro" id="IPR000152">
    <property type="entry name" value="EGF-type_Asp/Asn_hydroxyl_site"/>
</dbReference>
<dbReference type="InterPro" id="IPR018097">
    <property type="entry name" value="EGF_Ca-bd_CS"/>
</dbReference>
<dbReference type="InterPro" id="IPR035972">
    <property type="entry name" value="GLA-like_dom_SF"/>
</dbReference>
<dbReference type="InterPro" id="IPR000294">
    <property type="entry name" value="GLA_domain"/>
</dbReference>
<dbReference type="InterPro" id="IPR012224">
    <property type="entry name" value="Pept_S1A_FX"/>
</dbReference>
<dbReference type="InterPro" id="IPR050442">
    <property type="entry name" value="Peptidase_S1_coag_factors"/>
</dbReference>
<dbReference type="InterPro" id="IPR009003">
    <property type="entry name" value="Peptidase_S1_PA"/>
</dbReference>
<dbReference type="InterPro" id="IPR043504">
    <property type="entry name" value="Peptidase_S1_PA_chymotrypsin"/>
</dbReference>
<dbReference type="InterPro" id="IPR001314">
    <property type="entry name" value="Peptidase_S1A"/>
</dbReference>
<dbReference type="InterPro" id="IPR001254">
    <property type="entry name" value="Trypsin_dom"/>
</dbReference>
<dbReference type="InterPro" id="IPR018114">
    <property type="entry name" value="TRYPSIN_HIS"/>
</dbReference>
<dbReference type="InterPro" id="IPR033116">
    <property type="entry name" value="TRYPSIN_SER"/>
</dbReference>
<dbReference type="PANTHER" id="PTHR24278">
    <property type="entry name" value="COAGULATION FACTOR"/>
    <property type="match status" value="1"/>
</dbReference>
<dbReference type="PANTHER" id="PTHR24278:SF0">
    <property type="entry name" value="VITAMIN K-DEPENDENT PROTEIN C"/>
    <property type="match status" value="1"/>
</dbReference>
<dbReference type="Pfam" id="PF14670">
    <property type="entry name" value="FXa_inhibition"/>
    <property type="match status" value="1"/>
</dbReference>
<dbReference type="Pfam" id="PF00594">
    <property type="entry name" value="Gla"/>
    <property type="match status" value="1"/>
</dbReference>
<dbReference type="Pfam" id="PF00089">
    <property type="entry name" value="Trypsin"/>
    <property type="match status" value="1"/>
</dbReference>
<dbReference type="PIRSF" id="PIRSF001143">
    <property type="entry name" value="Factor_X"/>
    <property type="match status" value="1"/>
</dbReference>
<dbReference type="PRINTS" id="PR00722">
    <property type="entry name" value="CHYMOTRYPSIN"/>
</dbReference>
<dbReference type="PRINTS" id="PR00001">
    <property type="entry name" value="GLABLOOD"/>
</dbReference>
<dbReference type="SMART" id="SM00181">
    <property type="entry name" value="EGF"/>
    <property type="match status" value="2"/>
</dbReference>
<dbReference type="SMART" id="SM00179">
    <property type="entry name" value="EGF_CA"/>
    <property type="match status" value="1"/>
</dbReference>
<dbReference type="SMART" id="SM00069">
    <property type="entry name" value="GLA"/>
    <property type="match status" value="1"/>
</dbReference>
<dbReference type="SMART" id="SM00020">
    <property type="entry name" value="Tryp_SPc"/>
    <property type="match status" value="1"/>
</dbReference>
<dbReference type="SUPFAM" id="SSF57196">
    <property type="entry name" value="EGF/Laminin"/>
    <property type="match status" value="2"/>
</dbReference>
<dbReference type="SUPFAM" id="SSF57630">
    <property type="entry name" value="GLA-domain"/>
    <property type="match status" value="1"/>
</dbReference>
<dbReference type="SUPFAM" id="SSF50494">
    <property type="entry name" value="Trypsin-like serine proteases"/>
    <property type="match status" value="1"/>
</dbReference>
<dbReference type="PROSITE" id="PS00010">
    <property type="entry name" value="ASX_HYDROXYL"/>
    <property type="match status" value="1"/>
</dbReference>
<dbReference type="PROSITE" id="PS00022">
    <property type="entry name" value="EGF_1"/>
    <property type="match status" value="1"/>
</dbReference>
<dbReference type="PROSITE" id="PS01186">
    <property type="entry name" value="EGF_2"/>
    <property type="match status" value="2"/>
</dbReference>
<dbReference type="PROSITE" id="PS50026">
    <property type="entry name" value="EGF_3"/>
    <property type="match status" value="1"/>
</dbReference>
<dbReference type="PROSITE" id="PS01187">
    <property type="entry name" value="EGF_CA"/>
    <property type="match status" value="1"/>
</dbReference>
<dbReference type="PROSITE" id="PS00011">
    <property type="entry name" value="GLA_1"/>
    <property type="match status" value="1"/>
</dbReference>
<dbReference type="PROSITE" id="PS50998">
    <property type="entry name" value="GLA_2"/>
    <property type="match status" value="1"/>
</dbReference>
<dbReference type="PROSITE" id="PS50240">
    <property type="entry name" value="TRYPSIN_DOM"/>
    <property type="match status" value="1"/>
</dbReference>
<dbReference type="PROSITE" id="PS00134">
    <property type="entry name" value="TRYPSIN_HIS"/>
    <property type="match status" value="1"/>
</dbReference>
<dbReference type="PROSITE" id="PS00135">
    <property type="entry name" value="TRYPSIN_SER"/>
    <property type="match status" value="1"/>
</dbReference>
<feature type="signal peptide" evidence="4">
    <location>
        <begin position="1"/>
        <end position="18"/>
    </location>
</feature>
<feature type="propeptide" id="PRO_0000028127" evidence="1">
    <location>
        <begin position="19"/>
        <end position="41"/>
    </location>
</feature>
<feature type="chain" id="PRO_0000028128" description="Vitamin K-dependent protein C">
    <location>
        <begin position="42"/>
        <end position="461"/>
    </location>
</feature>
<feature type="chain" id="PRO_0000028129" description="Vitamin K-dependent protein C light chain" evidence="1">
    <location>
        <begin position="42"/>
        <end position="196"/>
    </location>
</feature>
<feature type="chain" id="PRO_0000028130" description="Vitamin K-dependent protein C heavy chain" evidence="1">
    <location>
        <begin position="199"/>
        <end position="461"/>
    </location>
</feature>
<feature type="peptide" id="PRO_0000028131" description="Activation peptide" evidence="1">
    <location>
        <begin position="199"/>
        <end position="212"/>
    </location>
</feature>
<feature type="domain" description="Gla" evidence="7">
    <location>
        <begin position="42"/>
        <end position="87"/>
    </location>
</feature>
<feature type="domain" description="EGF-like 1" evidence="5">
    <location>
        <begin position="96"/>
        <end position="131"/>
    </location>
</feature>
<feature type="domain" description="EGF-like 2" evidence="5">
    <location>
        <begin position="135"/>
        <end position="175"/>
    </location>
</feature>
<feature type="domain" description="Peptidase S1" evidence="6">
    <location>
        <begin position="213"/>
        <end position="450"/>
    </location>
</feature>
<feature type="active site" description="Charge relay system">
    <location>
        <position position="254"/>
    </location>
</feature>
<feature type="active site" description="Charge relay system">
    <location>
        <position position="300"/>
    </location>
</feature>
<feature type="active site" description="Charge relay system">
    <location>
        <position position="402"/>
    </location>
</feature>
<feature type="site" description="Cleavage; by thrombin" evidence="1">
    <location>
        <begin position="212"/>
        <end position="213"/>
    </location>
</feature>
<feature type="modified residue" description="4-carboxyglutamate" evidence="2 7">
    <location>
        <position position="47"/>
    </location>
</feature>
<feature type="modified residue" description="4-carboxyglutamate" evidence="2 7">
    <location>
        <position position="48"/>
    </location>
</feature>
<feature type="modified residue" description="4-carboxyglutamate" evidence="2 7">
    <location>
        <position position="55"/>
    </location>
</feature>
<feature type="modified residue" description="4-carboxyglutamate" evidence="2 7">
    <location>
        <position position="57"/>
    </location>
</feature>
<feature type="modified residue" description="4-carboxyglutamate" evidence="2 7">
    <location>
        <position position="60"/>
    </location>
</feature>
<feature type="modified residue" description="4-carboxyglutamate" evidence="2 7">
    <location>
        <position position="61"/>
    </location>
</feature>
<feature type="modified residue" description="4-carboxyglutamate" evidence="2 7">
    <location>
        <position position="66"/>
    </location>
</feature>
<feature type="modified residue" description="4-carboxyglutamate" evidence="2 7">
    <location>
        <position position="67"/>
    </location>
</feature>
<feature type="modified residue" description="4-carboxyglutamate" evidence="2 7">
    <location>
        <position position="70"/>
    </location>
</feature>
<feature type="modified residue" description="4-carboxyglutamate" evidence="2 7">
    <location>
        <position position="76"/>
    </location>
</feature>
<feature type="modified residue" description="(3R)-3-hydroxyaspartate" evidence="1">
    <location>
        <position position="112"/>
    </location>
</feature>
<feature type="glycosylation site" description="N-linked (GlcNAc...) asparagine" evidence="4">
    <location>
        <position position="215"/>
    </location>
</feature>
<feature type="glycosylation site" description="N-linked (GlcNAc...) asparagine" evidence="4">
    <location>
        <position position="291"/>
    </location>
</feature>
<feature type="glycosylation site" description="N-linked (GlcNAc...) asparagine" evidence="4">
    <location>
        <position position="355"/>
    </location>
</feature>
<feature type="disulfide bond" evidence="1">
    <location>
        <begin position="58"/>
        <end position="63"/>
    </location>
</feature>
<feature type="disulfide bond" evidence="1">
    <location>
        <begin position="91"/>
        <end position="110"/>
    </location>
</feature>
<feature type="disulfide bond" evidence="1">
    <location>
        <begin position="100"/>
        <end position="105"/>
    </location>
</feature>
<feature type="disulfide bond" evidence="1">
    <location>
        <begin position="104"/>
        <end position="119"/>
    </location>
</feature>
<feature type="disulfide bond" evidence="1">
    <location>
        <begin position="121"/>
        <end position="130"/>
    </location>
</feature>
<feature type="disulfide bond" evidence="1">
    <location>
        <begin position="139"/>
        <end position="150"/>
    </location>
</feature>
<feature type="disulfide bond" evidence="1">
    <location>
        <begin position="146"/>
        <end position="159"/>
    </location>
</feature>
<feature type="disulfide bond" evidence="1">
    <location>
        <begin position="161"/>
        <end position="174"/>
    </location>
</feature>
<feature type="disulfide bond" description="Interchain (between light and heavy chains)" evidence="5 6 7">
    <location>
        <begin position="182"/>
        <end position="320"/>
    </location>
</feature>
<feature type="disulfide bond" evidence="1">
    <location>
        <begin position="239"/>
        <end position="255"/>
    </location>
</feature>
<feature type="disulfide bond" evidence="1">
    <location>
        <begin position="373"/>
        <end position="387"/>
    </location>
</feature>
<feature type="disulfide bond" evidence="1">
    <location>
        <begin position="398"/>
        <end position="426"/>
    </location>
</feature>
<protein>
    <recommendedName>
        <fullName>Vitamin K-dependent protein C</fullName>
        <ecNumber>3.4.21.69</ecNumber>
    </recommendedName>
    <alternativeName>
        <fullName>Anticoagulant protein C</fullName>
    </alternativeName>
    <alternativeName>
        <fullName>Autoprothrombin IIA</fullName>
    </alternativeName>
    <alternativeName>
        <fullName>Blood coagulation factor XIV</fullName>
    </alternativeName>
    <component>
        <recommendedName>
            <fullName>Vitamin K-dependent protein C light chain</fullName>
        </recommendedName>
    </component>
    <component>
        <recommendedName>
            <fullName>Vitamin K-dependent protein C heavy chain</fullName>
        </recommendedName>
    </component>
    <component>
        <recommendedName>
            <fullName>Activation peptide</fullName>
        </recommendedName>
    </component>
</protein>
<sequence>MWQFRIFLLFASTWGISGVSAHPDPVFSSSEGAHQVLRVRRANSFLEEVRAGSLERECMEEICDFEEAQEIFQNVEDTLAFWIKYFDGDQCSTPPLDHQCDSPCCGHGTCIDGLGGFSCSCDKGWEGRFCQQEMGFQDCRVKNGGCYHYCLEETRGRRCRCAPGYELADDHMHCRPTVNFPCGKLWKRTDKKRKNFKRDIDPEDEELELGPRIVNGTLTKQGDSPWQAILLDSKKKLACGGVLIHTSWVLTAAHCLESSKKLTVRLGEYDLRRRDPWELDLDIKEVLVHPNYTRSNSDNDIALLRLSQPATLSKTIVPICLPNSGLAQELSQAGQETVVTGWGYQSDKVKDGRRNRTFILTFIRIPLAARNDCMQVMNNVVSENMLCAGIIGDTRDACDGDSGGPMVVFFRGTWFLVGLVSWGEGCGHLNNYGVYTKVGSYLKWIHSYIGERDVSLKSPKL</sequence>
<organism>
    <name type="scientific">Rattus norvegicus</name>
    <name type="common">Rat</name>
    <dbReference type="NCBI Taxonomy" id="10116"/>
    <lineage>
        <taxon>Eukaryota</taxon>
        <taxon>Metazoa</taxon>
        <taxon>Chordata</taxon>
        <taxon>Craniata</taxon>
        <taxon>Vertebrata</taxon>
        <taxon>Euteleostomi</taxon>
        <taxon>Mammalia</taxon>
        <taxon>Eutheria</taxon>
        <taxon>Euarchontoglires</taxon>
        <taxon>Glires</taxon>
        <taxon>Rodentia</taxon>
        <taxon>Myomorpha</taxon>
        <taxon>Muroidea</taxon>
        <taxon>Muridae</taxon>
        <taxon>Murinae</taxon>
        <taxon>Rattus</taxon>
    </lineage>
</organism>